<keyword id="KW-0001">2Fe-2S</keyword>
<keyword id="KW-0028">Amino-acid biosynthesis</keyword>
<keyword id="KW-0100">Branched-chain amino acid biosynthesis</keyword>
<keyword id="KW-0408">Iron</keyword>
<keyword id="KW-0411">Iron-sulfur</keyword>
<keyword id="KW-0456">Lyase</keyword>
<keyword id="KW-0460">Magnesium</keyword>
<keyword id="KW-0479">Metal-binding</keyword>
<keyword id="KW-1185">Reference proteome</keyword>
<dbReference type="EC" id="4.2.1.9" evidence="1"/>
<dbReference type="EMBL" id="CP000697">
    <property type="protein sequence ID" value="ABQ30262.1"/>
    <property type="molecule type" value="Genomic_DNA"/>
</dbReference>
<dbReference type="RefSeq" id="WP_007422795.1">
    <property type="nucleotide sequence ID" value="NC_009484.1"/>
</dbReference>
<dbReference type="SMR" id="A5FXD0"/>
<dbReference type="STRING" id="349163.Acry_1046"/>
<dbReference type="KEGG" id="acr:Acry_1046"/>
<dbReference type="eggNOG" id="COG0129">
    <property type="taxonomic scope" value="Bacteria"/>
</dbReference>
<dbReference type="HOGENOM" id="CLU_014271_4_2_5"/>
<dbReference type="UniPathway" id="UPA00047">
    <property type="reaction ID" value="UER00057"/>
</dbReference>
<dbReference type="UniPathway" id="UPA00049">
    <property type="reaction ID" value="UER00061"/>
</dbReference>
<dbReference type="Proteomes" id="UP000000245">
    <property type="component" value="Chromosome"/>
</dbReference>
<dbReference type="GO" id="GO:0005829">
    <property type="term" value="C:cytosol"/>
    <property type="evidence" value="ECO:0007669"/>
    <property type="project" value="TreeGrafter"/>
</dbReference>
<dbReference type="GO" id="GO:0051537">
    <property type="term" value="F:2 iron, 2 sulfur cluster binding"/>
    <property type="evidence" value="ECO:0007669"/>
    <property type="project" value="UniProtKB-UniRule"/>
</dbReference>
<dbReference type="GO" id="GO:0004160">
    <property type="term" value="F:dihydroxy-acid dehydratase activity"/>
    <property type="evidence" value="ECO:0007669"/>
    <property type="project" value="UniProtKB-UniRule"/>
</dbReference>
<dbReference type="GO" id="GO:0000287">
    <property type="term" value="F:magnesium ion binding"/>
    <property type="evidence" value="ECO:0007669"/>
    <property type="project" value="UniProtKB-UniRule"/>
</dbReference>
<dbReference type="GO" id="GO:0009097">
    <property type="term" value="P:isoleucine biosynthetic process"/>
    <property type="evidence" value="ECO:0007669"/>
    <property type="project" value="UniProtKB-UniRule"/>
</dbReference>
<dbReference type="GO" id="GO:0009099">
    <property type="term" value="P:L-valine biosynthetic process"/>
    <property type="evidence" value="ECO:0007669"/>
    <property type="project" value="UniProtKB-UniRule"/>
</dbReference>
<dbReference type="FunFam" id="3.50.30.80:FF:000001">
    <property type="entry name" value="Dihydroxy-acid dehydratase"/>
    <property type="match status" value="1"/>
</dbReference>
<dbReference type="Gene3D" id="3.50.30.80">
    <property type="entry name" value="IlvD/EDD C-terminal domain-like"/>
    <property type="match status" value="1"/>
</dbReference>
<dbReference type="HAMAP" id="MF_00012">
    <property type="entry name" value="IlvD"/>
    <property type="match status" value="1"/>
</dbReference>
<dbReference type="InterPro" id="IPR042096">
    <property type="entry name" value="Dihydro-acid_dehy_C"/>
</dbReference>
<dbReference type="InterPro" id="IPR004404">
    <property type="entry name" value="DihydroxyA_deHydtase"/>
</dbReference>
<dbReference type="InterPro" id="IPR020558">
    <property type="entry name" value="DiOHA_6PGluconate_deHydtase_CS"/>
</dbReference>
<dbReference type="InterPro" id="IPR056740">
    <property type="entry name" value="ILV_EDD_C"/>
</dbReference>
<dbReference type="InterPro" id="IPR000581">
    <property type="entry name" value="ILV_EDD_N"/>
</dbReference>
<dbReference type="InterPro" id="IPR037237">
    <property type="entry name" value="IlvD/EDD_N"/>
</dbReference>
<dbReference type="NCBIfam" id="TIGR00110">
    <property type="entry name" value="ilvD"/>
    <property type="match status" value="1"/>
</dbReference>
<dbReference type="NCBIfam" id="NF009103">
    <property type="entry name" value="PRK12448.1"/>
    <property type="match status" value="1"/>
</dbReference>
<dbReference type="PANTHER" id="PTHR43661">
    <property type="entry name" value="D-XYLONATE DEHYDRATASE"/>
    <property type="match status" value="1"/>
</dbReference>
<dbReference type="PANTHER" id="PTHR43661:SF3">
    <property type="entry name" value="D-XYLONATE DEHYDRATASE YAGF-RELATED"/>
    <property type="match status" value="1"/>
</dbReference>
<dbReference type="Pfam" id="PF24877">
    <property type="entry name" value="ILV_EDD_C"/>
    <property type="match status" value="1"/>
</dbReference>
<dbReference type="Pfam" id="PF00920">
    <property type="entry name" value="ILVD_EDD_N"/>
    <property type="match status" value="1"/>
</dbReference>
<dbReference type="SUPFAM" id="SSF143975">
    <property type="entry name" value="IlvD/EDD N-terminal domain-like"/>
    <property type="match status" value="1"/>
</dbReference>
<dbReference type="SUPFAM" id="SSF52016">
    <property type="entry name" value="LeuD/IlvD-like"/>
    <property type="match status" value="1"/>
</dbReference>
<dbReference type="PROSITE" id="PS00886">
    <property type="entry name" value="ILVD_EDD_1"/>
    <property type="match status" value="1"/>
</dbReference>
<dbReference type="PROSITE" id="PS00887">
    <property type="entry name" value="ILVD_EDD_2"/>
    <property type="match status" value="1"/>
</dbReference>
<comment type="function">
    <text evidence="1">Functions in the biosynthesis of branched-chain amino acids. Catalyzes the dehydration of (2R,3R)-2,3-dihydroxy-3-methylpentanoate (2,3-dihydroxy-3-methylvalerate) into 2-oxo-3-methylpentanoate (2-oxo-3-methylvalerate) and of (2R)-2,3-dihydroxy-3-methylbutanoate (2,3-dihydroxyisovalerate) into 2-oxo-3-methylbutanoate (2-oxoisovalerate), the penultimate precursor to L-isoleucine and L-valine, respectively.</text>
</comment>
<comment type="catalytic activity">
    <reaction evidence="1">
        <text>(2R)-2,3-dihydroxy-3-methylbutanoate = 3-methyl-2-oxobutanoate + H2O</text>
        <dbReference type="Rhea" id="RHEA:24809"/>
        <dbReference type="ChEBI" id="CHEBI:11851"/>
        <dbReference type="ChEBI" id="CHEBI:15377"/>
        <dbReference type="ChEBI" id="CHEBI:49072"/>
        <dbReference type="EC" id="4.2.1.9"/>
    </reaction>
    <physiologicalReaction direction="left-to-right" evidence="1">
        <dbReference type="Rhea" id="RHEA:24810"/>
    </physiologicalReaction>
</comment>
<comment type="catalytic activity">
    <reaction evidence="1">
        <text>(2R,3R)-2,3-dihydroxy-3-methylpentanoate = (S)-3-methyl-2-oxopentanoate + H2O</text>
        <dbReference type="Rhea" id="RHEA:27694"/>
        <dbReference type="ChEBI" id="CHEBI:15377"/>
        <dbReference type="ChEBI" id="CHEBI:35146"/>
        <dbReference type="ChEBI" id="CHEBI:49258"/>
        <dbReference type="EC" id="4.2.1.9"/>
    </reaction>
    <physiologicalReaction direction="left-to-right" evidence="1">
        <dbReference type="Rhea" id="RHEA:27695"/>
    </physiologicalReaction>
</comment>
<comment type="cofactor">
    <cofactor evidence="1">
        <name>[2Fe-2S] cluster</name>
        <dbReference type="ChEBI" id="CHEBI:190135"/>
    </cofactor>
    <text evidence="1">Binds 1 [2Fe-2S] cluster per subunit. This cluster acts as a Lewis acid cofactor.</text>
</comment>
<comment type="cofactor">
    <cofactor evidence="1">
        <name>Mg(2+)</name>
        <dbReference type="ChEBI" id="CHEBI:18420"/>
    </cofactor>
</comment>
<comment type="pathway">
    <text evidence="1">Amino-acid biosynthesis; L-isoleucine biosynthesis; L-isoleucine from 2-oxobutanoate: step 3/4.</text>
</comment>
<comment type="pathway">
    <text evidence="1">Amino-acid biosynthesis; L-valine biosynthesis; L-valine from pyruvate: step 3/4.</text>
</comment>
<comment type="subunit">
    <text evidence="1">Homodimer.</text>
</comment>
<comment type="similarity">
    <text evidence="1">Belongs to the IlvD/Edd family.</text>
</comment>
<sequence>MPQYRSRTSTHGRNMAGARALWRATGMGDADFGKPIIAIANSFTQFVPGHVHLKDLGQLVAREIEAAGGVAKEFNTIAVDDGIAMGHGGMLYSLPSRELIADAVEYMVNAHCADALVCISNCDKITPGMLMAAMRLNIPTIFVSGGPMEAGKYIADGETRAADLITAMVVAADPTKTDEQAAVMERSACPTCGSCSGMFTANSMNCLTEALGLALPGNGSLLATHADRKRLFVEAGWQIVDLARRYYEQDDEGVLPRRIGGFKAFENAMSLDIAMGGSTNTVLHLLAAAREAELDFTMADIDRLSRRVPNLCKVSPSVSNVHMEDVHRAGGIMGILGALDRAGLIHRDCATVHEKTIGEAIDRWDVMRGGETAKTLYSAAPGGVRTTEAFSQSRRYESLDLDREKGVIRDAEHAFSKDGGLAVLYGNIALDGAIVKTAGVDASILVFEGPARIFESQEDAVAGILGDRVKAGDVVLIRYEGPKGGPGMQEMLYPTSYLKSKGLGKSCALITDGRFSGGTAGLSIGHISPEAAQGGAIGLVEEGDIIAIDIPNRKLDVKLDEATLEARRAAMEAKGKAAWKPAARERVVSAALQAYAALTTSAANGAVRDVTQVQRGR</sequence>
<proteinExistence type="inferred from homology"/>
<protein>
    <recommendedName>
        <fullName evidence="1">Dihydroxy-acid dehydratase</fullName>
        <shortName evidence="1">DAD</shortName>
        <ecNumber evidence="1">4.2.1.9</ecNumber>
    </recommendedName>
</protein>
<feature type="chain" id="PRO_1000000951" description="Dihydroxy-acid dehydratase">
    <location>
        <begin position="1"/>
        <end position="617"/>
    </location>
</feature>
<feature type="active site" description="Proton acceptor" evidence="1">
    <location>
        <position position="516"/>
    </location>
</feature>
<feature type="binding site" evidence="1">
    <location>
        <position position="81"/>
    </location>
    <ligand>
        <name>Mg(2+)</name>
        <dbReference type="ChEBI" id="CHEBI:18420"/>
    </ligand>
</feature>
<feature type="binding site" evidence="1">
    <location>
        <position position="122"/>
    </location>
    <ligand>
        <name>[2Fe-2S] cluster</name>
        <dbReference type="ChEBI" id="CHEBI:190135"/>
    </ligand>
</feature>
<feature type="binding site" evidence="1">
    <location>
        <position position="123"/>
    </location>
    <ligand>
        <name>Mg(2+)</name>
        <dbReference type="ChEBI" id="CHEBI:18420"/>
    </ligand>
</feature>
<feature type="binding site" description="via carbamate group" evidence="1">
    <location>
        <position position="124"/>
    </location>
    <ligand>
        <name>Mg(2+)</name>
        <dbReference type="ChEBI" id="CHEBI:18420"/>
    </ligand>
</feature>
<feature type="binding site" evidence="1">
    <location>
        <position position="195"/>
    </location>
    <ligand>
        <name>[2Fe-2S] cluster</name>
        <dbReference type="ChEBI" id="CHEBI:190135"/>
    </ligand>
</feature>
<feature type="binding site" evidence="1">
    <location>
        <position position="490"/>
    </location>
    <ligand>
        <name>Mg(2+)</name>
        <dbReference type="ChEBI" id="CHEBI:18420"/>
    </ligand>
</feature>
<feature type="modified residue" description="N6-carboxylysine" evidence="1">
    <location>
        <position position="124"/>
    </location>
</feature>
<reference key="1">
    <citation type="submission" date="2007-05" db="EMBL/GenBank/DDBJ databases">
        <title>Complete sequence of chromosome of Acidiphilium cryptum JF-5.</title>
        <authorList>
            <consortium name="US DOE Joint Genome Institute"/>
            <person name="Copeland A."/>
            <person name="Lucas S."/>
            <person name="Lapidus A."/>
            <person name="Barry K."/>
            <person name="Detter J.C."/>
            <person name="Glavina del Rio T."/>
            <person name="Hammon N."/>
            <person name="Israni S."/>
            <person name="Dalin E."/>
            <person name="Tice H."/>
            <person name="Pitluck S."/>
            <person name="Sims D."/>
            <person name="Brettin T."/>
            <person name="Bruce D."/>
            <person name="Han C."/>
            <person name="Schmutz J."/>
            <person name="Larimer F."/>
            <person name="Land M."/>
            <person name="Hauser L."/>
            <person name="Kyrpides N."/>
            <person name="Kim E."/>
            <person name="Magnuson T."/>
            <person name="Richardson P."/>
        </authorList>
    </citation>
    <scope>NUCLEOTIDE SEQUENCE [LARGE SCALE GENOMIC DNA]</scope>
    <source>
        <strain>JF-5</strain>
    </source>
</reference>
<evidence type="ECO:0000255" key="1">
    <source>
        <dbReference type="HAMAP-Rule" id="MF_00012"/>
    </source>
</evidence>
<name>ILVD_ACICJ</name>
<gene>
    <name evidence="1" type="primary">ilvD</name>
    <name type="ordered locus">Acry_1046</name>
</gene>
<organism>
    <name type="scientific">Acidiphilium cryptum (strain JF-5)</name>
    <dbReference type="NCBI Taxonomy" id="349163"/>
    <lineage>
        <taxon>Bacteria</taxon>
        <taxon>Pseudomonadati</taxon>
        <taxon>Pseudomonadota</taxon>
        <taxon>Alphaproteobacteria</taxon>
        <taxon>Acetobacterales</taxon>
        <taxon>Acidocellaceae</taxon>
        <taxon>Acidiphilium</taxon>
    </lineage>
</organism>
<accession>A5FXD0</accession>